<organism>
    <name type="scientific">Kocuria rhizophila (strain ATCC 9341 / DSM 348 / NBRC 103217 / DC2201)</name>
    <dbReference type="NCBI Taxonomy" id="378753"/>
    <lineage>
        <taxon>Bacteria</taxon>
        <taxon>Bacillati</taxon>
        <taxon>Actinomycetota</taxon>
        <taxon>Actinomycetes</taxon>
        <taxon>Micrococcales</taxon>
        <taxon>Micrococcaceae</taxon>
        <taxon>Kocuria</taxon>
    </lineage>
</organism>
<gene>
    <name evidence="1" type="primary">rplL</name>
    <name type="ordered locus">KRH_05960</name>
</gene>
<feature type="chain" id="PRO_1000121451" description="Large ribosomal subunit protein bL12">
    <location>
        <begin position="1"/>
        <end position="128"/>
    </location>
</feature>
<comment type="function">
    <text evidence="1">Forms part of the ribosomal stalk which helps the ribosome interact with GTP-bound translation factors. Is thus essential for accurate translation.</text>
</comment>
<comment type="subunit">
    <text evidence="1">Homodimer. Part of the ribosomal stalk of the 50S ribosomal subunit. Forms a multimeric L10(L12)X complex, where L10 forms an elongated spine to which 2 to 4 L12 dimers bind in a sequential fashion. Binds GTP-bound translation factors.</text>
</comment>
<comment type="similarity">
    <text evidence="1">Belongs to the bacterial ribosomal protein bL12 family.</text>
</comment>
<dbReference type="EMBL" id="AP009152">
    <property type="protein sequence ID" value="BAG28943.1"/>
    <property type="molecule type" value="Genomic_DNA"/>
</dbReference>
<dbReference type="RefSeq" id="WP_012397669.1">
    <property type="nucleotide sequence ID" value="NZ_VECX01000001.1"/>
</dbReference>
<dbReference type="SMR" id="B2GIJ4"/>
<dbReference type="STRING" id="378753.KRH_05960"/>
<dbReference type="KEGG" id="krh:KRH_05960"/>
<dbReference type="eggNOG" id="COG0222">
    <property type="taxonomic scope" value="Bacteria"/>
</dbReference>
<dbReference type="HOGENOM" id="CLU_086499_3_0_11"/>
<dbReference type="OrthoDB" id="9811748at2"/>
<dbReference type="Proteomes" id="UP000008838">
    <property type="component" value="Chromosome"/>
</dbReference>
<dbReference type="GO" id="GO:0022625">
    <property type="term" value="C:cytosolic large ribosomal subunit"/>
    <property type="evidence" value="ECO:0007669"/>
    <property type="project" value="TreeGrafter"/>
</dbReference>
<dbReference type="GO" id="GO:0003729">
    <property type="term" value="F:mRNA binding"/>
    <property type="evidence" value="ECO:0007669"/>
    <property type="project" value="TreeGrafter"/>
</dbReference>
<dbReference type="GO" id="GO:0003735">
    <property type="term" value="F:structural constituent of ribosome"/>
    <property type="evidence" value="ECO:0007669"/>
    <property type="project" value="InterPro"/>
</dbReference>
<dbReference type="GO" id="GO:0006412">
    <property type="term" value="P:translation"/>
    <property type="evidence" value="ECO:0007669"/>
    <property type="project" value="UniProtKB-UniRule"/>
</dbReference>
<dbReference type="CDD" id="cd00387">
    <property type="entry name" value="Ribosomal_L7_L12"/>
    <property type="match status" value="1"/>
</dbReference>
<dbReference type="FunFam" id="3.30.1390.10:FF:000001">
    <property type="entry name" value="50S ribosomal protein L7/L12"/>
    <property type="match status" value="1"/>
</dbReference>
<dbReference type="Gene3D" id="3.30.1390.10">
    <property type="match status" value="1"/>
</dbReference>
<dbReference type="Gene3D" id="1.20.5.710">
    <property type="entry name" value="Single helix bin"/>
    <property type="match status" value="1"/>
</dbReference>
<dbReference type="HAMAP" id="MF_00368">
    <property type="entry name" value="Ribosomal_bL12"/>
    <property type="match status" value="1"/>
</dbReference>
<dbReference type="InterPro" id="IPR000206">
    <property type="entry name" value="Ribosomal_bL12"/>
</dbReference>
<dbReference type="InterPro" id="IPR013823">
    <property type="entry name" value="Ribosomal_bL12_C"/>
</dbReference>
<dbReference type="InterPro" id="IPR014719">
    <property type="entry name" value="Ribosomal_bL12_C/ClpS-like"/>
</dbReference>
<dbReference type="InterPro" id="IPR008932">
    <property type="entry name" value="Ribosomal_bL12_oligo"/>
</dbReference>
<dbReference type="InterPro" id="IPR036235">
    <property type="entry name" value="Ribosomal_bL12_oligo_N_sf"/>
</dbReference>
<dbReference type="NCBIfam" id="TIGR00855">
    <property type="entry name" value="L12"/>
    <property type="match status" value="1"/>
</dbReference>
<dbReference type="PANTHER" id="PTHR45987">
    <property type="entry name" value="39S RIBOSOMAL PROTEIN L12"/>
    <property type="match status" value="1"/>
</dbReference>
<dbReference type="PANTHER" id="PTHR45987:SF4">
    <property type="entry name" value="LARGE RIBOSOMAL SUBUNIT PROTEIN BL12M"/>
    <property type="match status" value="1"/>
</dbReference>
<dbReference type="Pfam" id="PF00542">
    <property type="entry name" value="Ribosomal_L12"/>
    <property type="match status" value="1"/>
</dbReference>
<dbReference type="Pfam" id="PF16320">
    <property type="entry name" value="Ribosomal_L12_N"/>
    <property type="match status" value="1"/>
</dbReference>
<dbReference type="SUPFAM" id="SSF54736">
    <property type="entry name" value="ClpS-like"/>
    <property type="match status" value="1"/>
</dbReference>
<dbReference type="SUPFAM" id="SSF48300">
    <property type="entry name" value="Ribosomal protein L7/12, oligomerisation (N-terminal) domain"/>
    <property type="match status" value="1"/>
</dbReference>
<proteinExistence type="inferred from homology"/>
<protein>
    <recommendedName>
        <fullName evidence="1">Large ribosomal subunit protein bL12</fullName>
    </recommendedName>
    <alternativeName>
        <fullName evidence="2">50S ribosomal protein L7/L12</fullName>
    </alternativeName>
</protein>
<keyword id="KW-1185">Reference proteome</keyword>
<keyword id="KW-0687">Ribonucleoprotein</keyword>
<keyword id="KW-0689">Ribosomal protein</keyword>
<evidence type="ECO:0000255" key="1">
    <source>
        <dbReference type="HAMAP-Rule" id="MF_00368"/>
    </source>
</evidence>
<evidence type="ECO:0000305" key="2"/>
<reference key="1">
    <citation type="journal article" date="2008" name="J. Bacteriol.">
        <title>Complete genome sequence of the soil actinomycete Kocuria rhizophila.</title>
        <authorList>
            <person name="Takarada H."/>
            <person name="Sekine M."/>
            <person name="Kosugi H."/>
            <person name="Matsuo Y."/>
            <person name="Fujisawa T."/>
            <person name="Omata S."/>
            <person name="Kishi E."/>
            <person name="Shimizu A."/>
            <person name="Tsukatani N."/>
            <person name="Tanikawa S."/>
            <person name="Fujita N."/>
            <person name="Harayama S."/>
        </authorList>
    </citation>
    <scope>NUCLEOTIDE SEQUENCE [LARGE SCALE GENOMIC DNA]</scope>
    <source>
        <strain>ATCC 9341 / DSM 348 / NBRC 103217 / DC2201</strain>
    </source>
</reference>
<sequence length="128" mass="13207">MAKLTTEELIEAFKELSLIELSDFVKAFEETFDVTAAAPVAVAGAAPAAGDAGAAEEEKTEFDVVLESAGDKKIQVIKEVRGLTSLGLKEAKDLVDSAPKAVLEGATKEAADKAKEALEGAGATVTVK</sequence>
<accession>B2GIJ4</accession>
<name>RL7_KOCRD</name>